<name>MED16_XENTR</name>
<organism>
    <name type="scientific">Xenopus tropicalis</name>
    <name type="common">Western clawed frog</name>
    <name type="synonym">Silurana tropicalis</name>
    <dbReference type="NCBI Taxonomy" id="8364"/>
    <lineage>
        <taxon>Eukaryota</taxon>
        <taxon>Metazoa</taxon>
        <taxon>Chordata</taxon>
        <taxon>Craniata</taxon>
        <taxon>Vertebrata</taxon>
        <taxon>Euteleostomi</taxon>
        <taxon>Amphibia</taxon>
        <taxon>Batrachia</taxon>
        <taxon>Anura</taxon>
        <taxon>Pipoidea</taxon>
        <taxon>Pipidae</taxon>
        <taxon>Xenopodinae</taxon>
        <taxon>Xenopus</taxon>
        <taxon>Silurana</taxon>
    </lineage>
</organism>
<feature type="chain" id="PRO_0000307620" description="Mediator of RNA polymerase II transcription subunit 16">
    <location>
        <begin position="1"/>
        <end position="828"/>
    </location>
</feature>
<feature type="repeat" description="WD 1">
    <location>
        <begin position="68"/>
        <end position="107"/>
    </location>
</feature>
<feature type="repeat" description="WD 2">
    <location>
        <begin position="199"/>
        <end position="241"/>
    </location>
</feature>
<feature type="repeat" description="WD 3">
    <location>
        <begin position="264"/>
        <end position="308"/>
    </location>
</feature>
<feature type="repeat" description="WD 4">
    <location>
        <begin position="622"/>
        <end position="663"/>
    </location>
</feature>
<feature type="repeat" description="WD 5">
    <location>
        <begin position="777"/>
        <end position="816"/>
    </location>
</feature>
<evidence type="ECO:0000250" key="1"/>
<evidence type="ECO:0000305" key="2"/>
<keyword id="KW-0010">Activator</keyword>
<keyword id="KW-0539">Nucleus</keyword>
<keyword id="KW-1185">Reference proteome</keyword>
<keyword id="KW-0677">Repeat</keyword>
<keyword id="KW-0804">Transcription</keyword>
<keyword id="KW-0805">Transcription regulation</keyword>
<keyword id="KW-0853">WD repeat</keyword>
<gene>
    <name type="primary">med16</name>
</gene>
<protein>
    <recommendedName>
        <fullName>Mediator of RNA polymerase II transcription subunit 16</fullName>
    </recommendedName>
    <alternativeName>
        <fullName>Mediator complex subunit 16</fullName>
    </alternativeName>
</protein>
<comment type="function">
    <text evidence="1">Component of the Mediator complex, a coactivator involved in the regulated transcription of nearly all RNA polymerase II-dependent genes. Mediator functions as a bridge to convey information from gene-specific regulatory proteins to the basal RNA polymerase II transcription machinery. Mediator is recruited to promoters by direct interactions with regulatory proteins and serves as a scaffold for the assembly of a functional preinitiation complex with RNA polymerase II and the general transcription factors (By similarity).</text>
</comment>
<comment type="subunit">
    <text evidence="1">Component of the Mediator complex.</text>
</comment>
<comment type="subcellular location">
    <subcellularLocation>
        <location evidence="2">Nucleus</location>
    </subcellularLocation>
</comment>
<comment type="similarity">
    <text evidence="2">Belongs to the Mediator complex subunit 16 family.</text>
</comment>
<sequence length="828" mass="92540">MDVGYVCEWDKRPRTSHCPSIPLVCAWSCRNLIAFTTDQRNEEEKDITNLIHILDTEHPWDVYSINSGHQEVITSLEWDQSGSRLLSADADGRIKCWGMTDHLANSWQSLVGSEVDGDPIVALSWLHNGVKLALHVEKSGVSSFGEKFSRVKFSPSLTLFGGKPMEGWIAVTVSGLVTVSLLKPNGQVLTATESLCRLRCRVALADIAFTGGGNIVVATCDGSSTSPVQFYKVCVSVVSEKCKIDTEILPSLFMRCTTDPARKDKFPAVTHLKFLARDMSEQVLLCASNQCSSIAECWSLRKEGLPLNNIFQQLSPAVSDKQPMILKWRILSATNELERVSAVALPKLPISLTNTDIKVASETKFYPGLGLALAFHDGNVQIVHRLSLQPMAVLYGSSLRPSEEPSLKRQRSPTPCIHFKALQMSWTSLALVGLDTQGKLSMLRVSPSMGHSLDMSTSLRHLLFLLEYCMVTGYDWWDILLHVQPGMVHNLVEKLNEEYTRQNAALQQVLSTRILAMKASLCKLSQTTVTRVCDYHAKLFLISISCTLKSLLRPHVLNTPDKSPGDRLTEICNKFTDTDIDKVMINLKTEEFVLDMPTLQSLQQLIQWLGDFVLYLLASLPNQGSSVRPGHSFLRDGASLGTLREMMVMIRIWGLLKPSCLPVYTATSDTQDSMSLLFRLLTRLWLCCRDESHPCDPDESLIDECCLLPSQLLIPNMDWLPLGNGIISRLQSKLPLRLQFGKPPVAPSYASVQYEAYTRSPTQPKIDHLRRLHLGTFPTEPCKSCTRCGCVTMLKSPNKATAVKQWEQRWIKTCLCGGLWRKMPHTYS</sequence>
<accession>Q08D69</accession>
<dbReference type="EMBL" id="BC123916">
    <property type="protein sequence ID" value="AAI23917.1"/>
    <property type="molecule type" value="mRNA"/>
</dbReference>
<dbReference type="RefSeq" id="NP_001072641.1">
    <property type="nucleotide sequence ID" value="NM_001079173.1"/>
</dbReference>
<dbReference type="SMR" id="Q08D69"/>
<dbReference type="FunCoup" id="Q08D69">
    <property type="interactions" value="2510"/>
</dbReference>
<dbReference type="STRING" id="8364.ENSXETP00000038276"/>
<dbReference type="PaxDb" id="8364-ENSXETP00000046771"/>
<dbReference type="DNASU" id="780097"/>
<dbReference type="GeneID" id="780097"/>
<dbReference type="KEGG" id="xtr:780097"/>
<dbReference type="AGR" id="Xenbase:XB-GENE-967800"/>
<dbReference type="CTD" id="10025"/>
<dbReference type="Xenbase" id="XB-GENE-967800">
    <property type="gene designation" value="med16"/>
</dbReference>
<dbReference type="eggNOG" id="ENOG502QQ3H">
    <property type="taxonomic scope" value="Eukaryota"/>
</dbReference>
<dbReference type="HOGENOM" id="CLU_018773_0_0_1"/>
<dbReference type="InParanoid" id="Q08D69"/>
<dbReference type="OrthoDB" id="10018574at2759"/>
<dbReference type="Proteomes" id="UP000008143">
    <property type="component" value="Chromosome 1"/>
</dbReference>
<dbReference type="GO" id="GO:0016592">
    <property type="term" value="C:mediator complex"/>
    <property type="evidence" value="ECO:0007669"/>
    <property type="project" value="InterPro"/>
</dbReference>
<dbReference type="FunFam" id="2.130.10.10:FF:000165">
    <property type="entry name" value="Mediator of RNA polymerase II transcription subunit 16"/>
    <property type="match status" value="1"/>
</dbReference>
<dbReference type="Gene3D" id="2.130.10.10">
    <property type="entry name" value="YVTN repeat-like/Quinoprotein amine dehydrogenase"/>
    <property type="match status" value="1"/>
</dbReference>
<dbReference type="InterPro" id="IPR048616">
    <property type="entry name" value="MED16_bridge"/>
</dbReference>
<dbReference type="InterPro" id="IPR048338">
    <property type="entry name" value="Mediator_Med16"/>
</dbReference>
<dbReference type="InterPro" id="IPR048339">
    <property type="entry name" value="Mediator_Med16_C"/>
</dbReference>
<dbReference type="InterPro" id="IPR021665">
    <property type="entry name" value="Mediator_Med16_N"/>
</dbReference>
<dbReference type="InterPro" id="IPR015943">
    <property type="entry name" value="WD40/YVTN_repeat-like_dom_sf"/>
</dbReference>
<dbReference type="InterPro" id="IPR036322">
    <property type="entry name" value="WD40_repeat_dom_sf"/>
</dbReference>
<dbReference type="InterPro" id="IPR001680">
    <property type="entry name" value="WD40_rpt"/>
</dbReference>
<dbReference type="PANTHER" id="PTHR13224:SF6">
    <property type="entry name" value="MEDIATOR OF RNA POLYMERASE II TRANSCRIPTION SUBUNIT 16"/>
    <property type="match status" value="1"/>
</dbReference>
<dbReference type="PANTHER" id="PTHR13224">
    <property type="entry name" value="THYROID HORMONE RECEPTOR-ASSOCIATED PROTEIN-RELATED"/>
    <property type="match status" value="1"/>
</dbReference>
<dbReference type="Pfam" id="PF20718">
    <property type="entry name" value="Med16_bridge"/>
    <property type="match status" value="1"/>
</dbReference>
<dbReference type="Pfam" id="PF20719">
    <property type="entry name" value="Med16_C"/>
    <property type="match status" value="1"/>
</dbReference>
<dbReference type="Pfam" id="PF11635">
    <property type="entry name" value="Med16_N"/>
    <property type="match status" value="1"/>
</dbReference>
<dbReference type="SMART" id="SM00320">
    <property type="entry name" value="WD40"/>
    <property type="match status" value="1"/>
</dbReference>
<dbReference type="SUPFAM" id="SSF50978">
    <property type="entry name" value="WD40 repeat-like"/>
    <property type="match status" value="1"/>
</dbReference>
<dbReference type="PROSITE" id="PS50082">
    <property type="entry name" value="WD_REPEATS_2"/>
    <property type="match status" value="1"/>
</dbReference>
<dbReference type="PROSITE" id="PS50294">
    <property type="entry name" value="WD_REPEATS_REGION"/>
    <property type="match status" value="1"/>
</dbReference>
<reference key="1">
    <citation type="submission" date="2006-09" db="EMBL/GenBank/DDBJ databases">
        <authorList>
            <consortium name="NIH - Xenopus Gene Collection (XGC) project"/>
        </authorList>
    </citation>
    <scope>NUCLEOTIDE SEQUENCE [LARGE SCALE MRNA]</scope>
    <source>
        <tissue>Brain</tissue>
    </source>
</reference>
<proteinExistence type="evidence at transcript level"/>